<reference key="1">
    <citation type="journal article" date="2007" name="Nature">
        <title>Evolution of genes and genomes on the Drosophila phylogeny.</title>
        <authorList>
            <consortium name="Drosophila 12 genomes consortium"/>
        </authorList>
    </citation>
    <scope>NUCLEOTIDE SEQUENCE [LARGE SCALE GENOMIC DNA]</scope>
    <source>
        <strain>Tucson 15010-1051.87</strain>
    </source>
</reference>
<protein>
    <recommendedName>
        <fullName evidence="1">Cytoplasmic tRNA 2-thiolation protein 2</fullName>
    </recommendedName>
</protein>
<keyword id="KW-0963">Cytoplasm</keyword>
<keyword id="KW-1185">Reference proteome</keyword>
<keyword id="KW-0819">tRNA processing</keyword>
<proteinExistence type="inferred from homology"/>
<accession>B4M8J8</accession>
<evidence type="ECO:0000255" key="1">
    <source>
        <dbReference type="HAMAP-Rule" id="MF_03054"/>
    </source>
</evidence>
<comment type="function">
    <text evidence="1">Plays a central role in 2-thiolation of mcm(5)S(2)U at tRNA wobble positions of tRNA(Lys), tRNA(Glu) and tRNA(Gln). May act by forming a heterodimer with NCS6/CTU1 that ligates sulfur from thiocarboxylated URM1 onto the uridine of tRNAs at wobble position.</text>
</comment>
<comment type="pathway">
    <text evidence="1">tRNA modification; 5-methoxycarbonylmethyl-2-thiouridine-tRNA biosynthesis.</text>
</comment>
<comment type="subcellular location">
    <subcellularLocation>
        <location evidence="1">Cytoplasm</location>
    </subcellularLocation>
</comment>
<comment type="similarity">
    <text evidence="1">Belongs to the CTU2/NCS2 family.</text>
</comment>
<feature type="chain" id="PRO_0000369278" description="Cytoplasmic tRNA 2-thiolation protein 2">
    <location>
        <begin position="1"/>
        <end position="400"/>
    </location>
</feature>
<dbReference type="EMBL" id="CH940654">
    <property type="protein sequence ID" value="EDW57524.1"/>
    <property type="molecule type" value="Genomic_DNA"/>
</dbReference>
<dbReference type="SMR" id="B4M8J8"/>
<dbReference type="FunCoup" id="B4M8J8">
    <property type="interactions" value="1739"/>
</dbReference>
<dbReference type="STRING" id="7244.B4M8J8"/>
<dbReference type="EnsemblMetazoa" id="FBtr0234020">
    <property type="protein sequence ID" value="FBpp0232512"/>
    <property type="gene ID" value="FBgn0205260"/>
</dbReference>
<dbReference type="EnsemblMetazoa" id="XM_002057415.3">
    <property type="protein sequence ID" value="XP_002057451.1"/>
    <property type="gene ID" value="LOC6634299"/>
</dbReference>
<dbReference type="GeneID" id="6634299"/>
<dbReference type="KEGG" id="dvi:6634299"/>
<dbReference type="CTD" id="348180"/>
<dbReference type="eggNOG" id="KOG2594">
    <property type="taxonomic scope" value="Eukaryota"/>
</dbReference>
<dbReference type="HOGENOM" id="CLU_024534_2_1_1"/>
<dbReference type="InParanoid" id="B4M8J8"/>
<dbReference type="OMA" id="CHACRNI"/>
<dbReference type="OrthoDB" id="25129at2759"/>
<dbReference type="PhylomeDB" id="B4M8J8"/>
<dbReference type="UniPathway" id="UPA00988"/>
<dbReference type="Proteomes" id="UP000008792">
    <property type="component" value="Unassembled WGS sequence"/>
</dbReference>
<dbReference type="GO" id="GO:0005829">
    <property type="term" value="C:cytosol"/>
    <property type="evidence" value="ECO:0000250"/>
    <property type="project" value="UniProtKB"/>
</dbReference>
<dbReference type="GO" id="GO:0016779">
    <property type="term" value="F:nucleotidyltransferase activity"/>
    <property type="evidence" value="ECO:0007669"/>
    <property type="project" value="UniProtKB-UniRule"/>
</dbReference>
<dbReference type="GO" id="GO:0016783">
    <property type="term" value="F:sulfurtransferase activity"/>
    <property type="evidence" value="ECO:0007669"/>
    <property type="project" value="TreeGrafter"/>
</dbReference>
<dbReference type="GO" id="GO:0000049">
    <property type="term" value="F:tRNA binding"/>
    <property type="evidence" value="ECO:0007669"/>
    <property type="project" value="InterPro"/>
</dbReference>
<dbReference type="GO" id="GO:0032447">
    <property type="term" value="P:protein urmylation"/>
    <property type="evidence" value="ECO:0007669"/>
    <property type="project" value="UniProtKB-UniRule"/>
</dbReference>
<dbReference type="GO" id="GO:0034227">
    <property type="term" value="P:tRNA thio-modification"/>
    <property type="evidence" value="ECO:0000250"/>
    <property type="project" value="UniProtKB"/>
</dbReference>
<dbReference type="GO" id="GO:0002143">
    <property type="term" value="P:tRNA wobble position uridine thiolation"/>
    <property type="evidence" value="ECO:0007669"/>
    <property type="project" value="TreeGrafter"/>
</dbReference>
<dbReference type="GO" id="GO:0002098">
    <property type="term" value="P:tRNA wobble uridine modification"/>
    <property type="evidence" value="ECO:0000250"/>
    <property type="project" value="UniProtKB"/>
</dbReference>
<dbReference type="FunFam" id="3.40.50.620:FF:000229">
    <property type="entry name" value="Cytoplasmic tRNA 2-thiolation protein 2"/>
    <property type="match status" value="1"/>
</dbReference>
<dbReference type="Gene3D" id="3.40.50.620">
    <property type="entry name" value="HUPs"/>
    <property type="match status" value="1"/>
</dbReference>
<dbReference type="HAMAP" id="MF_03054">
    <property type="entry name" value="CTU2"/>
    <property type="match status" value="1"/>
</dbReference>
<dbReference type="InterPro" id="IPR019407">
    <property type="entry name" value="CTU2"/>
</dbReference>
<dbReference type="InterPro" id="IPR014729">
    <property type="entry name" value="Rossmann-like_a/b/a_fold"/>
</dbReference>
<dbReference type="PANTHER" id="PTHR20882">
    <property type="entry name" value="CYTOPLASMIC TRNA 2-THIOLATION PROTEIN 2"/>
    <property type="match status" value="1"/>
</dbReference>
<dbReference type="PANTHER" id="PTHR20882:SF14">
    <property type="entry name" value="CYTOPLASMIC TRNA 2-THIOLATION PROTEIN 2"/>
    <property type="match status" value="1"/>
</dbReference>
<dbReference type="Pfam" id="PF10288">
    <property type="entry name" value="CTU2"/>
    <property type="match status" value="1"/>
</dbReference>
<dbReference type="SUPFAM" id="SSF52402">
    <property type="entry name" value="Adenine nucleotide alpha hydrolases-like"/>
    <property type="match status" value="1"/>
</dbReference>
<gene>
    <name type="ORF">GJ18095</name>
</gene>
<name>CTU2_DROVI</name>
<organism>
    <name type="scientific">Drosophila virilis</name>
    <name type="common">Fruit fly</name>
    <dbReference type="NCBI Taxonomy" id="7244"/>
    <lineage>
        <taxon>Eukaryota</taxon>
        <taxon>Metazoa</taxon>
        <taxon>Ecdysozoa</taxon>
        <taxon>Arthropoda</taxon>
        <taxon>Hexapoda</taxon>
        <taxon>Insecta</taxon>
        <taxon>Pterygota</taxon>
        <taxon>Neoptera</taxon>
        <taxon>Endopterygota</taxon>
        <taxon>Diptera</taxon>
        <taxon>Brachycera</taxon>
        <taxon>Muscomorpha</taxon>
        <taxon>Ephydroidea</taxon>
        <taxon>Drosophilidae</taxon>
        <taxon>Drosophila</taxon>
    </lineage>
</organism>
<sequence length="400" mass="43888">MCSIGEDDFGDEGATHAMLPGSSTVGTVITAGSCNKCGLNSLELYKLNFRAAECHQCFLSYARHKFRAALGAAKALPRNAEVLLLVDGSAESLVLLDMLHFAQTQNTFKRLHCSARVLHIDAQSSPSENDPLPMLNELRERYAPFEFYVIQLGAEVHSLKLLKDYSASRLDSTDNKLRSLTARQDYVRQQRKRLIGAVALQLQCTHVFEPSISSSLAAQLLTSVALGRGGSVALDVALLDDRLQGAVTLLRPLKDLNEQEVQFYIKAQQLKPFRSDESSLLSDASLQNLTSAFVANLQLNYASTVSTVFRTGDKIAAKRQPIEEGPSTCALCQSDLDSGLSDTLLAIEYSRAVSEMGVALQQQNNMEALEQRARERLNSMDNLCHACRNIHAELTHGSLI</sequence>